<keyword id="KW-0067">ATP-binding</keyword>
<keyword id="KW-0963">Cytoplasm</keyword>
<keyword id="KW-0235">DNA replication</keyword>
<keyword id="KW-0238">DNA-binding</keyword>
<keyword id="KW-0446">Lipid-binding</keyword>
<keyword id="KW-0547">Nucleotide-binding</keyword>
<comment type="function">
    <text evidence="1">Plays an essential role in the initiation and regulation of chromosomal replication. ATP-DnaA binds to the origin of replication (oriC) to initiate formation of the DNA replication initiation complex once per cell cycle. Binds the DnaA box (a 9 base pair repeat at the origin) and separates the double-stranded (ds)DNA. Forms a right-handed helical filament on oriC DNA; dsDNA binds to the exterior of the filament while single-stranded (ss)DNA is stabiized in the filament's interior. The ATP-DnaA-oriC complex binds and stabilizes one strand of the AT-rich DNA unwinding element (DUE), permitting loading of DNA polymerase. After initiation quickly degrades to an ADP-DnaA complex that is not apt for DNA replication. Binds acidic phospholipids.</text>
</comment>
<comment type="subunit">
    <text evidence="1">Oligomerizes as a right-handed, spiral filament on DNA at oriC.</text>
</comment>
<comment type="subcellular location">
    <subcellularLocation>
        <location evidence="1">Cytoplasm</location>
    </subcellularLocation>
</comment>
<comment type="domain">
    <text evidence="1">Domain I is involved in oligomerization and binding regulators, domain II is flexibile and of varying length in different bacteria, domain III forms the AAA+ region, while domain IV binds dsDNA.</text>
</comment>
<comment type="similarity">
    <text evidence="1">Belongs to the DnaA family.</text>
</comment>
<reference key="1">
    <citation type="journal article" date="2008" name="DNA Res.">
        <title>Determination of the genome sequence of Porphyromonas gingivalis strain ATCC 33277 and genomic comparison with strain W83 revealed extensive genome rearrangements in P. gingivalis.</title>
        <authorList>
            <person name="Naito M."/>
            <person name="Hirakawa H."/>
            <person name="Yamashita A."/>
            <person name="Ohara N."/>
            <person name="Shoji M."/>
            <person name="Yukitake H."/>
            <person name="Nakayama K."/>
            <person name="Toh H."/>
            <person name="Yoshimura F."/>
            <person name="Kuhara S."/>
            <person name="Hattori M."/>
            <person name="Hayashi T."/>
            <person name="Nakayama K."/>
        </authorList>
    </citation>
    <scope>NUCLEOTIDE SEQUENCE [LARGE SCALE GENOMIC DNA]</scope>
    <source>
        <strain>ATCC 33277 / DSM 20709 / CIP 103683 / JCM 12257 / NCTC 11834 / 2561</strain>
    </source>
</reference>
<evidence type="ECO:0000255" key="1">
    <source>
        <dbReference type="HAMAP-Rule" id="MF_00377"/>
    </source>
</evidence>
<organism>
    <name type="scientific">Porphyromonas gingivalis (strain ATCC 33277 / DSM 20709 / CIP 103683 / JCM 12257 / NCTC 11834 / 2561)</name>
    <dbReference type="NCBI Taxonomy" id="431947"/>
    <lineage>
        <taxon>Bacteria</taxon>
        <taxon>Pseudomonadati</taxon>
        <taxon>Bacteroidota</taxon>
        <taxon>Bacteroidia</taxon>
        <taxon>Bacteroidales</taxon>
        <taxon>Porphyromonadaceae</taxon>
        <taxon>Porphyromonas</taxon>
    </lineage>
</organism>
<sequence>MNYHSTNVNEIWDACLRILQDIVDERAYRTWFLPIIPVSIEGDTLTLQVPSQFFCEFLEGNFVEQLRTVLGRVIGPNASLQYNALVDNSSPKYPGTVTLAGCADGGQAAEQFDVNLLHRHMPNAATHSEAQDFDTQLNSRLNFRNFYQSECNYVARSVAEAIAASPGNTPMNPFFIYGASGVGKTHLCHALGLRVREMHPRLKVLYVSSHLFEMQFTTAARMGTINDFIAFYQQVDVLIIDDIQWLIGKKKTQLAFFQVFNHLYMLGKQIVLTSDKPPVDLNGMEERLVTRMAGATCVKIERPDLKLRREILQQRTLQSGVRLDESVLNFIAENVCDNVRELEGTLVSLITNSVVVGKEIDLTFAKRIVRQAVRLEKKEVTIECIQQAVSRVFQVQIEQMKSKSRKQDIVQARQVVMFLSKKHTAQSLSAIGELMGGRNHATVLHGCRCVTNEMEMNASFRSSVERAEQLIAN</sequence>
<protein>
    <recommendedName>
        <fullName evidence="1">Chromosomal replication initiator protein DnaA</fullName>
    </recommendedName>
</protein>
<gene>
    <name evidence="1" type="primary">dnaA</name>
    <name type="ordered locus">PGN_0001</name>
</gene>
<feature type="chain" id="PRO_1000122001" description="Chromosomal replication initiator protein DnaA">
    <location>
        <begin position="1"/>
        <end position="473"/>
    </location>
</feature>
<feature type="region of interest" description="Domain I, interacts with DnaA modulators" evidence="1">
    <location>
        <begin position="1"/>
        <end position="76"/>
    </location>
</feature>
<feature type="region of interest" description="Domain II" evidence="1">
    <location>
        <begin position="76"/>
        <end position="135"/>
    </location>
</feature>
<feature type="region of interest" description="Domain III, AAA+ region" evidence="1">
    <location>
        <begin position="136"/>
        <end position="353"/>
    </location>
</feature>
<feature type="region of interest" description="Domain IV, binds dsDNA" evidence="1">
    <location>
        <begin position="354"/>
        <end position="473"/>
    </location>
</feature>
<feature type="binding site" evidence="1">
    <location>
        <position position="181"/>
    </location>
    <ligand>
        <name>ATP</name>
        <dbReference type="ChEBI" id="CHEBI:30616"/>
    </ligand>
</feature>
<feature type="binding site" evidence="1">
    <location>
        <position position="183"/>
    </location>
    <ligand>
        <name>ATP</name>
        <dbReference type="ChEBI" id="CHEBI:30616"/>
    </ligand>
</feature>
<feature type="binding site" evidence="1">
    <location>
        <position position="184"/>
    </location>
    <ligand>
        <name>ATP</name>
        <dbReference type="ChEBI" id="CHEBI:30616"/>
    </ligand>
</feature>
<feature type="binding site" evidence="1">
    <location>
        <position position="185"/>
    </location>
    <ligand>
        <name>ATP</name>
        <dbReference type="ChEBI" id="CHEBI:30616"/>
    </ligand>
</feature>
<name>DNAA_PORG3</name>
<proteinExistence type="inferred from homology"/>
<accession>B2RGM5</accession>
<dbReference type="EMBL" id="AP009380">
    <property type="protein sequence ID" value="BAG32520.1"/>
    <property type="molecule type" value="Genomic_DNA"/>
</dbReference>
<dbReference type="RefSeq" id="WP_004583404.1">
    <property type="nucleotide sequence ID" value="NZ_CP025930.1"/>
</dbReference>
<dbReference type="SMR" id="B2RGM5"/>
<dbReference type="GeneID" id="29255261"/>
<dbReference type="KEGG" id="pgn:PGN_0001"/>
<dbReference type="eggNOG" id="COG0593">
    <property type="taxonomic scope" value="Bacteria"/>
</dbReference>
<dbReference type="HOGENOM" id="CLU_026910_3_0_10"/>
<dbReference type="OrthoDB" id="9807019at2"/>
<dbReference type="BioCyc" id="PGIN431947:G1G2V-1-MONOMER"/>
<dbReference type="Proteomes" id="UP000008842">
    <property type="component" value="Chromosome"/>
</dbReference>
<dbReference type="GO" id="GO:0005737">
    <property type="term" value="C:cytoplasm"/>
    <property type="evidence" value="ECO:0007669"/>
    <property type="project" value="UniProtKB-SubCell"/>
</dbReference>
<dbReference type="GO" id="GO:0005886">
    <property type="term" value="C:plasma membrane"/>
    <property type="evidence" value="ECO:0007669"/>
    <property type="project" value="TreeGrafter"/>
</dbReference>
<dbReference type="GO" id="GO:0005524">
    <property type="term" value="F:ATP binding"/>
    <property type="evidence" value="ECO:0007669"/>
    <property type="project" value="UniProtKB-UniRule"/>
</dbReference>
<dbReference type="GO" id="GO:0016887">
    <property type="term" value="F:ATP hydrolysis activity"/>
    <property type="evidence" value="ECO:0007669"/>
    <property type="project" value="InterPro"/>
</dbReference>
<dbReference type="GO" id="GO:0003688">
    <property type="term" value="F:DNA replication origin binding"/>
    <property type="evidence" value="ECO:0007669"/>
    <property type="project" value="UniProtKB-UniRule"/>
</dbReference>
<dbReference type="GO" id="GO:0008289">
    <property type="term" value="F:lipid binding"/>
    <property type="evidence" value="ECO:0007669"/>
    <property type="project" value="UniProtKB-KW"/>
</dbReference>
<dbReference type="GO" id="GO:0006270">
    <property type="term" value="P:DNA replication initiation"/>
    <property type="evidence" value="ECO:0007669"/>
    <property type="project" value="UniProtKB-UniRule"/>
</dbReference>
<dbReference type="GO" id="GO:0006275">
    <property type="term" value="P:regulation of DNA replication"/>
    <property type="evidence" value="ECO:0007669"/>
    <property type="project" value="UniProtKB-UniRule"/>
</dbReference>
<dbReference type="CDD" id="cd00009">
    <property type="entry name" value="AAA"/>
    <property type="match status" value="1"/>
</dbReference>
<dbReference type="CDD" id="cd06571">
    <property type="entry name" value="Bac_DnaA_C"/>
    <property type="match status" value="1"/>
</dbReference>
<dbReference type="Gene3D" id="1.10.1750.10">
    <property type="match status" value="1"/>
</dbReference>
<dbReference type="Gene3D" id="1.10.8.60">
    <property type="match status" value="1"/>
</dbReference>
<dbReference type="Gene3D" id="3.30.300.180">
    <property type="match status" value="1"/>
</dbReference>
<dbReference type="Gene3D" id="3.40.50.300">
    <property type="entry name" value="P-loop containing nucleotide triphosphate hydrolases"/>
    <property type="match status" value="1"/>
</dbReference>
<dbReference type="HAMAP" id="MF_00377">
    <property type="entry name" value="DnaA_bact"/>
    <property type="match status" value="1"/>
</dbReference>
<dbReference type="InterPro" id="IPR003593">
    <property type="entry name" value="AAA+_ATPase"/>
</dbReference>
<dbReference type="InterPro" id="IPR001957">
    <property type="entry name" value="Chromosome_initiator_DnaA"/>
</dbReference>
<dbReference type="InterPro" id="IPR020591">
    <property type="entry name" value="Chromosome_initiator_DnaA-like"/>
</dbReference>
<dbReference type="InterPro" id="IPR018312">
    <property type="entry name" value="Chromosome_initiator_DnaA_CS"/>
</dbReference>
<dbReference type="InterPro" id="IPR013159">
    <property type="entry name" value="DnaA_C"/>
</dbReference>
<dbReference type="InterPro" id="IPR013317">
    <property type="entry name" value="DnaA_dom"/>
</dbReference>
<dbReference type="InterPro" id="IPR024633">
    <property type="entry name" value="DnaA_N_dom"/>
</dbReference>
<dbReference type="InterPro" id="IPR038454">
    <property type="entry name" value="DnaA_N_sf"/>
</dbReference>
<dbReference type="InterPro" id="IPR027417">
    <property type="entry name" value="P-loop_NTPase"/>
</dbReference>
<dbReference type="InterPro" id="IPR010921">
    <property type="entry name" value="Trp_repressor/repl_initiator"/>
</dbReference>
<dbReference type="NCBIfam" id="TIGR00362">
    <property type="entry name" value="DnaA"/>
    <property type="match status" value="1"/>
</dbReference>
<dbReference type="PANTHER" id="PTHR30050">
    <property type="entry name" value="CHROMOSOMAL REPLICATION INITIATOR PROTEIN DNAA"/>
    <property type="match status" value="1"/>
</dbReference>
<dbReference type="PANTHER" id="PTHR30050:SF2">
    <property type="entry name" value="CHROMOSOMAL REPLICATION INITIATOR PROTEIN DNAA"/>
    <property type="match status" value="1"/>
</dbReference>
<dbReference type="Pfam" id="PF00308">
    <property type="entry name" value="Bac_DnaA"/>
    <property type="match status" value="1"/>
</dbReference>
<dbReference type="Pfam" id="PF08299">
    <property type="entry name" value="Bac_DnaA_C"/>
    <property type="match status" value="1"/>
</dbReference>
<dbReference type="Pfam" id="PF11638">
    <property type="entry name" value="DnaA_N"/>
    <property type="match status" value="1"/>
</dbReference>
<dbReference type="PRINTS" id="PR00051">
    <property type="entry name" value="DNAA"/>
</dbReference>
<dbReference type="SMART" id="SM00382">
    <property type="entry name" value="AAA"/>
    <property type="match status" value="1"/>
</dbReference>
<dbReference type="SMART" id="SM00760">
    <property type="entry name" value="Bac_DnaA_C"/>
    <property type="match status" value="1"/>
</dbReference>
<dbReference type="SUPFAM" id="SSF52540">
    <property type="entry name" value="P-loop containing nucleoside triphosphate hydrolases"/>
    <property type="match status" value="1"/>
</dbReference>
<dbReference type="SUPFAM" id="SSF48295">
    <property type="entry name" value="TrpR-like"/>
    <property type="match status" value="1"/>
</dbReference>
<dbReference type="PROSITE" id="PS01008">
    <property type="entry name" value="DNAA"/>
    <property type="match status" value="1"/>
</dbReference>